<protein>
    <recommendedName>
        <fullName evidence="1">Orotate phosphoribosyltransferase</fullName>
        <shortName evidence="1">OPRT</shortName>
        <shortName evidence="1">OPRTase</shortName>
        <ecNumber evidence="1">2.4.2.10</ecNumber>
    </recommendedName>
</protein>
<organism>
    <name type="scientific">Streptomyces avermitilis (strain ATCC 31267 / DSM 46492 / JCM 5070 / NBRC 14893 / NCIMB 12804 / NRRL 8165 / MA-4680)</name>
    <dbReference type="NCBI Taxonomy" id="227882"/>
    <lineage>
        <taxon>Bacteria</taxon>
        <taxon>Bacillati</taxon>
        <taxon>Actinomycetota</taxon>
        <taxon>Actinomycetes</taxon>
        <taxon>Kitasatosporales</taxon>
        <taxon>Streptomycetaceae</taxon>
        <taxon>Streptomyces</taxon>
    </lineage>
</organism>
<keyword id="KW-0328">Glycosyltransferase</keyword>
<keyword id="KW-0460">Magnesium</keyword>
<keyword id="KW-0665">Pyrimidine biosynthesis</keyword>
<keyword id="KW-1185">Reference proteome</keyword>
<keyword id="KW-0808">Transferase</keyword>
<feature type="chain" id="PRO_0000110748" description="Orotate phosphoribosyltransferase">
    <location>
        <begin position="1"/>
        <end position="182"/>
    </location>
</feature>
<feature type="binding site" evidence="1">
    <location>
        <position position="96"/>
    </location>
    <ligand>
        <name>5-phospho-alpha-D-ribose 1-diphosphate</name>
        <dbReference type="ChEBI" id="CHEBI:58017"/>
        <note>ligand shared between dimeric partners</note>
    </ligand>
</feature>
<feature type="binding site" description="in other chain" evidence="1">
    <location>
        <position position="97"/>
    </location>
    <ligand>
        <name>5-phospho-alpha-D-ribose 1-diphosphate</name>
        <dbReference type="ChEBI" id="CHEBI:58017"/>
        <note>ligand shared between dimeric partners</note>
    </ligand>
</feature>
<feature type="binding site" evidence="1">
    <location>
        <position position="100"/>
    </location>
    <ligand>
        <name>5-phospho-alpha-D-ribose 1-diphosphate</name>
        <dbReference type="ChEBI" id="CHEBI:58017"/>
        <note>ligand shared between dimeric partners</note>
    </ligand>
</feature>
<feature type="binding site" evidence="1">
    <location>
        <position position="102"/>
    </location>
    <ligand>
        <name>5-phospho-alpha-D-ribose 1-diphosphate</name>
        <dbReference type="ChEBI" id="CHEBI:58017"/>
        <note>ligand shared between dimeric partners</note>
    </ligand>
</feature>
<feature type="binding site" description="in other chain" evidence="1">
    <location>
        <begin position="122"/>
        <end position="130"/>
    </location>
    <ligand>
        <name>5-phospho-alpha-D-ribose 1-diphosphate</name>
        <dbReference type="ChEBI" id="CHEBI:58017"/>
        <note>ligand shared between dimeric partners</note>
    </ligand>
</feature>
<feature type="binding site" evidence="1">
    <location>
        <position position="126"/>
    </location>
    <ligand>
        <name>orotate</name>
        <dbReference type="ChEBI" id="CHEBI:30839"/>
    </ligand>
</feature>
<feature type="binding site" evidence="1">
    <location>
        <position position="154"/>
    </location>
    <ligand>
        <name>orotate</name>
        <dbReference type="ChEBI" id="CHEBI:30839"/>
    </ligand>
</feature>
<comment type="function">
    <text evidence="1">Catalyzes the transfer of a ribosyl phosphate group from 5-phosphoribose 1-diphosphate to orotate, leading to the formation of orotidine monophosphate (OMP).</text>
</comment>
<comment type="catalytic activity">
    <reaction evidence="1">
        <text>orotidine 5'-phosphate + diphosphate = orotate + 5-phospho-alpha-D-ribose 1-diphosphate</text>
        <dbReference type="Rhea" id="RHEA:10380"/>
        <dbReference type="ChEBI" id="CHEBI:30839"/>
        <dbReference type="ChEBI" id="CHEBI:33019"/>
        <dbReference type="ChEBI" id="CHEBI:57538"/>
        <dbReference type="ChEBI" id="CHEBI:58017"/>
        <dbReference type="EC" id="2.4.2.10"/>
    </reaction>
</comment>
<comment type="cofactor">
    <cofactor evidence="1">
        <name>Mg(2+)</name>
        <dbReference type="ChEBI" id="CHEBI:18420"/>
    </cofactor>
</comment>
<comment type="pathway">
    <text evidence="1">Pyrimidine metabolism; UMP biosynthesis via de novo pathway; UMP from orotate: step 1/2.</text>
</comment>
<comment type="subunit">
    <text evidence="1">Homodimer.</text>
</comment>
<comment type="similarity">
    <text evidence="1">Belongs to the purine/pyrimidine phosphoribosyltransferase family. PyrE subfamily.</text>
</comment>
<accession>Q82EU1</accession>
<proteinExistence type="inferred from homology"/>
<name>PYRE_STRAW</name>
<sequence length="182" mass="19034">MDDVRGALLQQIKDKAVVHGKVTLSSGLEADYYVDLRRITLDGEAAPLVGQVLLDLTADLDFDAVGGLTMGADPVAAAMLHAAAARGRRLDAFVVRKAAKAHGLQRRVEGPEIKGRRVLVVEDTSTTGGSPLTAVEAVREAGAEVVGVATIVDRATGAAEKIEAGAGVPYRFAYDKDELGLD</sequence>
<dbReference type="EC" id="2.4.2.10" evidence="1"/>
<dbReference type="EMBL" id="BA000030">
    <property type="protein sequence ID" value="BAC72234.1"/>
    <property type="molecule type" value="Genomic_DNA"/>
</dbReference>
<dbReference type="RefSeq" id="WP_010985947.1">
    <property type="nucleotide sequence ID" value="NZ_JZJK01000062.1"/>
</dbReference>
<dbReference type="SMR" id="Q82EU1"/>
<dbReference type="GeneID" id="41541602"/>
<dbReference type="KEGG" id="sma:SAVERM_4522"/>
<dbReference type="eggNOG" id="COG0461">
    <property type="taxonomic scope" value="Bacteria"/>
</dbReference>
<dbReference type="HOGENOM" id="CLU_074878_2_1_11"/>
<dbReference type="OrthoDB" id="1493031at2"/>
<dbReference type="UniPathway" id="UPA00070">
    <property type="reaction ID" value="UER00119"/>
</dbReference>
<dbReference type="Proteomes" id="UP000000428">
    <property type="component" value="Chromosome"/>
</dbReference>
<dbReference type="GO" id="GO:0000287">
    <property type="term" value="F:magnesium ion binding"/>
    <property type="evidence" value="ECO:0007669"/>
    <property type="project" value="UniProtKB-UniRule"/>
</dbReference>
<dbReference type="GO" id="GO:0004588">
    <property type="term" value="F:orotate phosphoribosyltransferase activity"/>
    <property type="evidence" value="ECO:0007669"/>
    <property type="project" value="UniProtKB-UniRule"/>
</dbReference>
<dbReference type="GO" id="GO:0044205">
    <property type="term" value="P:'de novo' UMP biosynthetic process"/>
    <property type="evidence" value="ECO:0007669"/>
    <property type="project" value="UniProtKB-UniRule"/>
</dbReference>
<dbReference type="GO" id="GO:0019856">
    <property type="term" value="P:pyrimidine nucleobase biosynthetic process"/>
    <property type="evidence" value="ECO:0007669"/>
    <property type="project" value="TreeGrafter"/>
</dbReference>
<dbReference type="CDD" id="cd06223">
    <property type="entry name" value="PRTases_typeI"/>
    <property type="match status" value="1"/>
</dbReference>
<dbReference type="FunFam" id="3.40.50.2020:FF:000029">
    <property type="entry name" value="Orotate phosphoribosyltransferase"/>
    <property type="match status" value="1"/>
</dbReference>
<dbReference type="Gene3D" id="3.40.50.2020">
    <property type="match status" value="1"/>
</dbReference>
<dbReference type="HAMAP" id="MF_01208">
    <property type="entry name" value="PyrE"/>
    <property type="match status" value="1"/>
</dbReference>
<dbReference type="InterPro" id="IPR023031">
    <property type="entry name" value="OPRT"/>
</dbReference>
<dbReference type="InterPro" id="IPR004467">
    <property type="entry name" value="Or_phspho_trans_dom"/>
</dbReference>
<dbReference type="InterPro" id="IPR000836">
    <property type="entry name" value="PRibTrfase_dom"/>
</dbReference>
<dbReference type="InterPro" id="IPR029057">
    <property type="entry name" value="PRTase-like"/>
</dbReference>
<dbReference type="NCBIfam" id="TIGR00336">
    <property type="entry name" value="pyrE"/>
    <property type="match status" value="1"/>
</dbReference>
<dbReference type="PANTHER" id="PTHR19278">
    <property type="entry name" value="OROTATE PHOSPHORIBOSYLTRANSFERASE"/>
    <property type="match status" value="1"/>
</dbReference>
<dbReference type="PANTHER" id="PTHR19278:SF9">
    <property type="entry name" value="URIDINE 5'-MONOPHOSPHATE SYNTHASE"/>
    <property type="match status" value="1"/>
</dbReference>
<dbReference type="Pfam" id="PF00156">
    <property type="entry name" value="Pribosyltran"/>
    <property type="match status" value="1"/>
</dbReference>
<dbReference type="SUPFAM" id="SSF53271">
    <property type="entry name" value="PRTase-like"/>
    <property type="match status" value="1"/>
</dbReference>
<evidence type="ECO:0000255" key="1">
    <source>
        <dbReference type="HAMAP-Rule" id="MF_01208"/>
    </source>
</evidence>
<reference key="1">
    <citation type="journal article" date="2001" name="Proc. Natl. Acad. Sci. U.S.A.">
        <title>Genome sequence of an industrial microorganism Streptomyces avermitilis: deducing the ability of producing secondary metabolites.</title>
        <authorList>
            <person name="Omura S."/>
            <person name="Ikeda H."/>
            <person name="Ishikawa J."/>
            <person name="Hanamoto A."/>
            <person name="Takahashi C."/>
            <person name="Shinose M."/>
            <person name="Takahashi Y."/>
            <person name="Horikawa H."/>
            <person name="Nakazawa H."/>
            <person name="Osonoe T."/>
            <person name="Kikuchi H."/>
            <person name="Shiba T."/>
            <person name="Sakaki Y."/>
            <person name="Hattori M."/>
        </authorList>
    </citation>
    <scope>NUCLEOTIDE SEQUENCE [LARGE SCALE GENOMIC DNA]</scope>
    <source>
        <strain>ATCC 31267 / DSM 46492 / JCM 5070 / NBRC 14893 / NCIMB 12804 / NRRL 8165 / MA-4680</strain>
    </source>
</reference>
<reference key="2">
    <citation type="journal article" date="2003" name="Nat. Biotechnol.">
        <title>Complete genome sequence and comparative analysis of the industrial microorganism Streptomyces avermitilis.</title>
        <authorList>
            <person name="Ikeda H."/>
            <person name="Ishikawa J."/>
            <person name="Hanamoto A."/>
            <person name="Shinose M."/>
            <person name="Kikuchi H."/>
            <person name="Shiba T."/>
            <person name="Sakaki Y."/>
            <person name="Hattori M."/>
            <person name="Omura S."/>
        </authorList>
    </citation>
    <scope>NUCLEOTIDE SEQUENCE [LARGE SCALE GENOMIC DNA]</scope>
    <source>
        <strain>ATCC 31267 / DSM 46492 / JCM 5070 / NBRC 14893 / NCIMB 12804 / NRRL 8165 / MA-4680</strain>
    </source>
</reference>
<gene>
    <name evidence="1" type="primary">pyrE</name>
    <name type="ordered locus">SAV_4522</name>
</gene>